<keyword id="KW-0687">Ribonucleoprotein</keyword>
<keyword id="KW-0689">Ribosomal protein</keyword>
<keyword id="KW-0694">RNA-binding</keyword>
<keyword id="KW-0699">rRNA-binding</keyword>
<proteinExistence type="inferred from homology"/>
<name>RL10_SALCH</name>
<reference key="1">
    <citation type="journal article" date="2005" name="Nucleic Acids Res.">
        <title>The genome sequence of Salmonella enterica serovar Choleraesuis, a highly invasive and resistant zoonotic pathogen.</title>
        <authorList>
            <person name="Chiu C.-H."/>
            <person name="Tang P."/>
            <person name="Chu C."/>
            <person name="Hu S."/>
            <person name="Bao Q."/>
            <person name="Yu J."/>
            <person name="Chou Y.-Y."/>
            <person name="Wang H.-S."/>
            <person name="Lee Y.-S."/>
        </authorList>
    </citation>
    <scope>NUCLEOTIDE SEQUENCE [LARGE SCALE GENOMIC DNA]</scope>
    <source>
        <strain>SC-B67</strain>
    </source>
</reference>
<gene>
    <name evidence="1" type="primary">rplJ</name>
    <name type="ordered locus">SCH_4035</name>
</gene>
<feature type="chain" id="PRO_0000234883" description="Large ribosomal subunit protein uL10">
    <location>
        <begin position="1"/>
        <end position="165"/>
    </location>
</feature>
<comment type="function">
    <text evidence="1">Forms part of the ribosomal stalk, playing a central role in the interaction of the ribosome with GTP-bound translation factors.</text>
</comment>
<comment type="subunit">
    <text evidence="1">Part of the ribosomal stalk of the 50S ribosomal subunit. The N-terminus interacts with L11 and the large rRNA to form the base of the stalk. The C-terminus forms an elongated spine to which L12 dimers bind in a sequential fashion forming a multimeric L10(L12)X complex.</text>
</comment>
<comment type="similarity">
    <text evidence="1">Belongs to the universal ribosomal protein uL10 family.</text>
</comment>
<dbReference type="EMBL" id="AE017220">
    <property type="protein sequence ID" value="AAX67941.1"/>
    <property type="molecule type" value="Genomic_DNA"/>
</dbReference>
<dbReference type="RefSeq" id="WP_001207203.1">
    <property type="nucleotide sequence ID" value="NC_006905.1"/>
</dbReference>
<dbReference type="GeneID" id="93756505"/>
<dbReference type="KEGG" id="sec:SCH_4035"/>
<dbReference type="HOGENOM" id="CLU_092227_0_2_6"/>
<dbReference type="Proteomes" id="UP000000538">
    <property type="component" value="Chromosome"/>
</dbReference>
<dbReference type="GO" id="GO:0015934">
    <property type="term" value="C:large ribosomal subunit"/>
    <property type="evidence" value="ECO:0007669"/>
    <property type="project" value="InterPro"/>
</dbReference>
<dbReference type="GO" id="GO:0070180">
    <property type="term" value="F:large ribosomal subunit rRNA binding"/>
    <property type="evidence" value="ECO:0007669"/>
    <property type="project" value="UniProtKB-UniRule"/>
</dbReference>
<dbReference type="GO" id="GO:0003735">
    <property type="term" value="F:structural constituent of ribosome"/>
    <property type="evidence" value="ECO:0007669"/>
    <property type="project" value="InterPro"/>
</dbReference>
<dbReference type="GO" id="GO:0006412">
    <property type="term" value="P:translation"/>
    <property type="evidence" value="ECO:0007669"/>
    <property type="project" value="UniProtKB-UniRule"/>
</dbReference>
<dbReference type="CDD" id="cd05797">
    <property type="entry name" value="Ribosomal_L10"/>
    <property type="match status" value="1"/>
</dbReference>
<dbReference type="FunFam" id="3.30.70.1730:FF:000001">
    <property type="entry name" value="50S ribosomal protein L10"/>
    <property type="match status" value="1"/>
</dbReference>
<dbReference type="Gene3D" id="3.30.70.1730">
    <property type="match status" value="1"/>
</dbReference>
<dbReference type="Gene3D" id="6.10.250.2350">
    <property type="match status" value="1"/>
</dbReference>
<dbReference type="HAMAP" id="MF_00362">
    <property type="entry name" value="Ribosomal_uL10"/>
    <property type="match status" value="1"/>
</dbReference>
<dbReference type="InterPro" id="IPR001790">
    <property type="entry name" value="Ribosomal_uL10"/>
</dbReference>
<dbReference type="InterPro" id="IPR043141">
    <property type="entry name" value="Ribosomal_uL10-like_sf"/>
</dbReference>
<dbReference type="InterPro" id="IPR022973">
    <property type="entry name" value="Ribosomal_uL10_bac"/>
</dbReference>
<dbReference type="InterPro" id="IPR047865">
    <property type="entry name" value="Ribosomal_uL10_bac_type"/>
</dbReference>
<dbReference type="InterPro" id="IPR002363">
    <property type="entry name" value="Ribosomal_uL10_CS_bac"/>
</dbReference>
<dbReference type="NCBIfam" id="NF000955">
    <property type="entry name" value="PRK00099.1-1"/>
    <property type="match status" value="1"/>
</dbReference>
<dbReference type="PANTHER" id="PTHR11560">
    <property type="entry name" value="39S RIBOSOMAL PROTEIN L10, MITOCHONDRIAL"/>
    <property type="match status" value="1"/>
</dbReference>
<dbReference type="Pfam" id="PF00466">
    <property type="entry name" value="Ribosomal_L10"/>
    <property type="match status" value="1"/>
</dbReference>
<dbReference type="SUPFAM" id="SSF160369">
    <property type="entry name" value="Ribosomal protein L10-like"/>
    <property type="match status" value="1"/>
</dbReference>
<dbReference type="PROSITE" id="PS01109">
    <property type="entry name" value="RIBOSOMAL_L10"/>
    <property type="match status" value="1"/>
</dbReference>
<evidence type="ECO:0000255" key="1">
    <source>
        <dbReference type="HAMAP-Rule" id="MF_00362"/>
    </source>
</evidence>
<evidence type="ECO:0000305" key="2"/>
<organism>
    <name type="scientific">Salmonella choleraesuis (strain SC-B67)</name>
    <dbReference type="NCBI Taxonomy" id="321314"/>
    <lineage>
        <taxon>Bacteria</taxon>
        <taxon>Pseudomonadati</taxon>
        <taxon>Pseudomonadota</taxon>
        <taxon>Gammaproteobacteria</taxon>
        <taxon>Enterobacterales</taxon>
        <taxon>Enterobacteriaceae</taxon>
        <taxon>Salmonella</taxon>
    </lineage>
</organism>
<accession>Q57H71</accession>
<sequence>MALNLQDKQAIVAEVSEVAKGALSAVVADSRGVTVDKMTELRKAGREAGVYMRVVRNTLLRRVVEGTQFECLKDTFVGPTLIAYSMEHPGAAARLFKEFAKANAKFEVKAAAFEGELIPASQIDRLATLPTYEEAIARLMATMKEASAGKLVRTLAAVRDAKEAA</sequence>
<protein>
    <recommendedName>
        <fullName evidence="1">Large ribosomal subunit protein uL10</fullName>
    </recommendedName>
    <alternativeName>
        <fullName evidence="2">50S ribosomal protein L10</fullName>
    </alternativeName>
</protein>